<name>SUCC_METFK</name>
<evidence type="ECO:0000255" key="1">
    <source>
        <dbReference type="HAMAP-Rule" id="MF_00558"/>
    </source>
</evidence>
<feature type="chain" id="PRO_1000082124" description="Succinate--CoA ligase [ADP-forming] subunit beta">
    <location>
        <begin position="1"/>
        <end position="387"/>
    </location>
</feature>
<feature type="domain" description="ATP-grasp" evidence="1">
    <location>
        <begin position="9"/>
        <end position="244"/>
    </location>
</feature>
<feature type="binding site" evidence="1">
    <location>
        <position position="46"/>
    </location>
    <ligand>
        <name>ATP</name>
        <dbReference type="ChEBI" id="CHEBI:30616"/>
    </ligand>
</feature>
<feature type="binding site" evidence="1">
    <location>
        <begin position="53"/>
        <end position="55"/>
    </location>
    <ligand>
        <name>ATP</name>
        <dbReference type="ChEBI" id="CHEBI:30616"/>
    </ligand>
</feature>
<feature type="binding site" evidence="1">
    <location>
        <position position="99"/>
    </location>
    <ligand>
        <name>ATP</name>
        <dbReference type="ChEBI" id="CHEBI:30616"/>
    </ligand>
</feature>
<feature type="binding site" evidence="1">
    <location>
        <position position="102"/>
    </location>
    <ligand>
        <name>ATP</name>
        <dbReference type="ChEBI" id="CHEBI:30616"/>
    </ligand>
</feature>
<feature type="binding site" evidence="1">
    <location>
        <position position="107"/>
    </location>
    <ligand>
        <name>ATP</name>
        <dbReference type="ChEBI" id="CHEBI:30616"/>
    </ligand>
</feature>
<feature type="binding site" evidence="1">
    <location>
        <position position="199"/>
    </location>
    <ligand>
        <name>Mg(2+)</name>
        <dbReference type="ChEBI" id="CHEBI:18420"/>
    </ligand>
</feature>
<feature type="binding site" evidence="1">
    <location>
        <position position="213"/>
    </location>
    <ligand>
        <name>Mg(2+)</name>
        <dbReference type="ChEBI" id="CHEBI:18420"/>
    </ligand>
</feature>
<feature type="binding site" evidence="1">
    <location>
        <position position="264"/>
    </location>
    <ligand>
        <name>substrate</name>
        <note>ligand shared with subunit alpha</note>
    </ligand>
</feature>
<feature type="binding site" evidence="1">
    <location>
        <begin position="321"/>
        <end position="323"/>
    </location>
    <ligand>
        <name>substrate</name>
        <note>ligand shared with subunit alpha</note>
    </ligand>
</feature>
<gene>
    <name evidence="1" type="primary">sucC</name>
    <name type="ordered locus">Mfla_1889</name>
</gene>
<sequence>MNLHEYQAKALLQRYGVNVPRSQVAETAQAAVEAARALEGDAWVVKAQVHAGGRGKAGGVKLVRTLDEVQDIAVSLLGKRLVTYQNAPDGQPVEKVLVEATLPIARELYVSMLVDRSLERVVLVASAAGGMEIEEIAKDSPEKILQEVCDPLNGLVDYQARNIAFALGLVGDQVAAFTRLAKGLYRLFKENDLALLEINPLIVTAEGALVALDCKMSVDDNALYRRRELAEQRDWSQDDAKEAEAHNAGLNYIALNGNIGCMVNGAGLAMATMDLIKLHGGAPANFLDVGGGATATTVARAFKIILADPNVKAILVNIFGGIMRCDIIAEGIITAVKEVGIEIPVVVRLEGTNVELGRKMLSESGLSIISAAGLTDAAQQAVAAVKV</sequence>
<proteinExistence type="inferred from homology"/>
<keyword id="KW-0067">ATP-binding</keyword>
<keyword id="KW-0436">Ligase</keyword>
<keyword id="KW-0460">Magnesium</keyword>
<keyword id="KW-0479">Metal-binding</keyword>
<keyword id="KW-0547">Nucleotide-binding</keyword>
<keyword id="KW-1185">Reference proteome</keyword>
<keyword id="KW-0816">Tricarboxylic acid cycle</keyword>
<organism>
    <name type="scientific">Methylobacillus flagellatus (strain ATCC 51484 / DSM 6875 / VKM B-1610 / KT)</name>
    <dbReference type="NCBI Taxonomy" id="265072"/>
    <lineage>
        <taxon>Bacteria</taxon>
        <taxon>Pseudomonadati</taxon>
        <taxon>Pseudomonadota</taxon>
        <taxon>Betaproteobacteria</taxon>
        <taxon>Nitrosomonadales</taxon>
        <taxon>Methylophilaceae</taxon>
        <taxon>Methylobacillus</taxon>
    </lineage>
</organism>
<dbReference type="EC" id="6.2.1.5" evidence="1"/>
<dbReference type="EMBL" id="CP000284">
    <property type="protein sequence ID" value="ABE50156.1"/>
    <property type="molecule type" value="Genomic_DNA"/>
</dbReference>
<dbReference type="RefSeq" id="WP_011480110.1">
    <property type="nucleotide sequence ID" value="NC_007947.1"/>
</dbReference>
<dbReference type="SMR" id="Q1H031"/>
<dbReference type="STRING" id="265072.Mfla_1889"/>
<dbReference type="KEGG" id="mfa:Mfla_1889"/>
<dbReference type="eggNOG" id="COG0045">
    <property type="taxonomic scope" value="Bacteria"/>
</dbReference>
<dbReference type="HOGENOM" id="CLU_037430_0_2_4"/>
<dbReference type="OrthoDB" id="9802602at2"/>
<dbReference type="UniPathway" id="UPA00223">
    <property type="reaction ID" value="UER00999"/>
</dbReference>
<dbReference type="Proteomes" id="UP000002440">
    <property type="component" value="Chromosome"/>
</dbReference>
<dbReference type="GO" id="GO:0005829">
    <property type="term" value="C:cytosol"/>
    <property type="evidence" value="ECO:0007669"/>
    <property type="project" value="TreeGrafter"/>
</dbReference>
<dbReference type="GO" id="GO:0042709">
    <property type="term" value="C:succinate-CoA ligase complex"/>
    <property type="evidence" value="ECO:0007669"/>
    <property type="project" value="TreeGrafter"/>
</dbReference>
<dbReference type="GO" id="GO:0005524">
    <property type="term" value="F:ATP binding"/>
    <property type="evidence" value="ECO:0007669"/>
    <property type="project" value="UniProtKB-UniRule"/>
</dbReference>
<dbReference type="GO" id="GO:0000287">
    <property type="term" value="F:magnesium ion binding"/>
    <property type="evidence" value="ECO:0007669"/>
    <property type="project" value="UniProtKB-UniRule"/>
</dbReference>
<dbReference type="GO" id="GO:0004775">
    <property type="term" value="F:succinate-CoA ligase (ADP-forming) activity"/>
    <property type="evidence" value="ECO:0007669"/>
    <property type="project" value="UniProtKB-UniRule"/>
</dbReference>
<dbReference type="GO" id="GO:0004776">
    <property type="term" value="F:succinate-CoA ligase (GDP-forming) activity"/>
    <property type="evidence" value="ECO:0007669"/>
    <property type="project" value="RHEA"/>
</dbReference>
<dbReference type="GO" id="GO:0006104">
    <property type="term" value="P:succinyl-CoA metabolic process"/>
    <property type="evidence" value="ECO:0007669"/>
    <property type="project" value="TreeGrafter"/>
</dbReference>
<dbReference type="GO" id="GO:0006099">
    <property type="term" value="P:tricarboxylic acid cycle"/>
    <property type="evidence" value="ECO:0007669"/>
    <property type="project" value="UniProtKB-UniRule"/>
</dbReference>
<dbReference type="FunFam" id="3.30.1490.20:FF:000002">
    <property type="entry name" value="Succinate--CoA ligase [ADP-forming] subunit beta"/>
    <property type="match status" value="1"/>
</dbReference>
<dbReference type="FunFam" id="3.30.470.20:FF:000002">
    <property type="entry name" value="Succinate--CoA ligase [ADP-forming] subunit beta"/>
    <property type="match status" value="1"/>
</dbReference>
<dbReference type="FunFam" id="3.40.50.261:FF:000001">
    <property type="entry name" value="Succinate--CoA ligase [ADP-forming] subunit beta"/>
    <property type="match status" value="1"/>
</dbReference>
<dbReference type="Gene3D" id="3.30.1490.20">
    <property type="entry name" value="ATP-grasp fold, A domain"/>
    <property type="match status" value="1"/>
</dbReference>
<dbReference type="Gene3D" id="3.30.470.20">
    <property type="entry name" value="ATP-grasp fold, B domain"/>
    <property type="match status" value="1"/>
</dbReference>
<dbReference type="Gene3D" id="3.40.50.261">
    <property type="entry name" value="Succinyl-CoA synthetase domains"/>
    <property type="match status" value="1"/>
</dbReference>
<dbReference type="HAMAP" id="MF_00558">
    <property type="entry name" value="Succ_CoA_beta"/>
    <property type="match status" value="1"/>
</dbReference>
<dbReference type="InterPro" id="IPR011761">
    <property type="entry name" value="ATP-grasp"/>
</dbReference>
<dbReference type="InterPro" id="IPR013650">
    <property type="entry name" value="ATP-grasp_succ-CoA_synth-type"/>
</dbReference>
<dbReference type="InterPro" id="IPR013815">
    <property type="entry name" value="ATP_grasp_subdomain_1"/>
</dbReference>
<dbReference type="InterPro" id="IPR017866">
    <property type="entry name" value="Succ-CoA_synthase_bsu_CS"/>
</dbReference>
<dbReference type="InterPro" id="IPR005811">
    <property type="entry name" value="SUCC_ACL_C"/>
</dbReference>
<dbReference type="InterPro" id="IPR005809">
    <property type="entry name" value="Succ_CoA_ligase-like_bsu"/>
</dbReference>
<dbReference type="InterPro" id="IPR016102">
    <property type="entry name" value="Succinyl-CoA_synth-like"/>
</dbReference>
<dbReference type="NCBIfam" id="NF001913">
    <property type="entry name" value="PRK00696.1"/>
    <property type="match status" value="1"/>
</dbReference>
<dbReference type="NCBIfam" id="TIGR01016">
    <property type="entry name" value="sucCoAbeta"/>
    <property type="match status" value="1"/>
</dbReference>
<dbReference type="PANTHER" id="PTHR11815:SF10">
    <property type="entry name" value="SUCCINATE--COA LIGASE [GDP-FORMING] SUBUNIT BETA, MITOCHONDRIAL"/>
    <property type="match status" value="1"/>
</dbReference>
<dbReference type="PANTHER" id="PTHR11815">
    <property type="entry name" value="SUCCINYL-COA SYNTHETASE BETA CHAIN"/>
    <property type="match status" value="1"/>
</dbReference>
<dbReference type="Pfam" id="PF08442">
    <property type="entry name" value="ATP-grasp_2"/>
    <property type="match status" value="1"/>
</dbReference>
<dbReference type="Pfam" id="PF00549">
    <property type="entry name" value="Ligase_CoA"/>
    <property type="match status" value="1"/>
</dbReference>
<dbReference type="PIRSF" id="PIRSF001554">
    <property type="entry name" value="SucCS_beta"/>
    <property type="match status" value="1"/>
</dbReference>
<dbReference type="SUPFAM" id="SSF56059">
    <property type="entry name" value="Glutathione synthetase ATP-binding domain-like"/>
    <property type="match status" value="1"/>
</dbReference>
<dbReference type="SUPFAM" id="SSF52210">
    <property type="entry name" value="Succinyl-CoA synthetase domains"/>
    <property type="match status" value="1"/>
</dbReference>
<dbReference type="PROSITE" id="PS50975">
    <property type="entry name" value="ATP_GRASP"/>
    <property type="match status" value="1"/>
</dbReference>
<dbReference type="PROSITE" id="PS01217">
    <property type="entry name" value="SUCCINYL_COA_LIG_3"/>
    <property type="match status" value="1"/>
</dbReference>
<protein>
    <recommendedName>
        <fullName evidence="1">Succinate--CoA ligase [ADP-forming] subunit beta</fullName>
        <ecNumber evidence="1">6.2.1.5</ecNumber>
    </recommendedName>
    <alternativeName>
        <fullName evidence="1">Succinyl-CoA synthetase subunit beta</fullName>
        <shortName evidence="1">SCS-beta</shortName>
    </alternativeName>
</protein>
<accession>Q1H031</accession>
<reference key="1">
    <citation type="submission" date="2006-03" db="EMBL/GenBank/DDBJ databases">
        <title>Complete sequence of Methylobacillus flagellatus KT.</title>
        <authorList>
            <consortium name="US DOE Joint Genome Institute"/>
            <person name="Copeland A."/>
            <person name="Lucas S."/>
            <person name="Lapidus A."/>
            <person name="Barry K."/>
            <person name="Detter J.C."/>
            <person name="Glavina del Rio T."/>
            <person name="Hammon N."/>
            <person name="Israni S."/>
            <person name="Dalin E."/>
            <person name="Tice H."/>
            <person name="Pitluck S."/>
            <person name="Brettin T."/>
            <person name="Bruce D."/>
            <person name="Han C."/>
            <person name="Tapia R."/>
            <person name="Saunders E."/>
            <person name="Gilna P."/>
            <person name="Schmutz J."/>
            <person name="Larimer F."/>
            <person name="Land M."/>
            <person name="Kyrpides N."/>
            <person name="Anderson I."/>
            <person name="Richardson P."/>
        </authorList>
    </citation>
    <scope>NUCLEOTIDE SEQUENCE [LARGE SCALE GENOMIC DNA]</scope>
    <source>
        <strain>ATCC 51484 / DSM 6875 / VKM B-1610 / KT</strain>
    </source>
</reference>
<comment type="function">
    <text evidence="1">Succinyl-CoA synthetase functions in the citric acid cycle (TCA), coupling the hydrolysis of succinyl-CoA to the synthesis of either ATP or GTP and thus represents the only step of substrate-level phosphorylation in the TCA. The beta subunit provides nucleotide specificity of the enzyme and binds the substrate succinate, while the binding sites for coenzyme A and phosphate are found in the alpha subunit.</text>
</comment>
<comment type="catalytic activity">
    <reaction evidence="1">
        <text>succinate + ATP + CoA = succinyl-CoA + ADP + phosphate</text>
        <dbReference type="Rhea" id="RHEA:17661"/>
        <dbReference type="ChEBI" id="CHEBI:30031"/>
        <dbReference type="ChEBI" id="CHEBI:30616"/>
        <dbReference type="ChEBI" id="CHEBI:43474"/>
        <dbReference type="ChEBI" id="CHEBI:57287"/>
        <dbReference type="ChEBI" id="CHEBI:57292"/>
        <dbReference type="ChEBI" id="CHEBI:456216"/>
        <dbReference type="EC" id="6.2.1.5"/>
    </reaction>
    <physiologicalReaction direction="right-to-left" evidence="1">
        <dbReference type="Rhea" id="RHEA:17663"/>
    </physiologicalReaction>
</comment>
<comment type="catalytic activity">
    <reaction evidence="1">
        <text>GTP + succinate + CoA = succinyl-CoA + GDP + phosphate</text>
        <dbReference type="Rhea" id="RHEA:22120"/>
        <dbReference type="ChEBI" id="CHEBI:30031"/>
        <dbReference type="ChEBI" id="CHEBI:37565"/>
        <dbReference type="ChEBI" id="CHEBI:43474"/>
        <dbReference type="ChEBI" id="CHEBI:57287"/>
        <dbReference type="ChEBI" id="CHEBI:57292"/>
        <dbReference type="ChEBI" id="CHEBI:58189"/>
    </reaction>
    <physiologicalReaction direction="right-to-left" evidence="1">
        <dbReference type="Rhea" id="RHEA:22122"/>
    </physiologicalReaction>
</comment>
<comment type="cofactor">
    <cofactor evidence="1">
        <name>Mg(2+)</name>
        <dbReference type="ChEBI" id="CHEBI:18420"/>
    </cofactor>
    <text evidence="1">Binds 1 Mg(2+) ion per subunit.</text>
</comment>
<comment type="pathway">
    <text evidence="1">Carbohydrate metabolism; tricarboxylic acid cycle; succinate from succinyl-CoA (ligase route): step 1/1.</text>
</comment>
<comment type="subunit">
    <text evidence="1">Heterotetramer of two alpha and two beta subunits.</text>
</comment>
<comment type="similarity">
    <text evidence="1">Belongs to the succinate/malate CoA ligase beta subunit family.</text>
</comment>